<evidence type="ECO:0000255" key="1">
    <source>
        <dbReference type="HAMAP-Rule" id="MF_00246"/>
    </source>
</evidence>
<accession>Q9KDV4</accession>
<dbReference type="EC" id="2.7.1.6" evidence="1"/>
<dbReference type="EMBL" id="BA000004">
    <property type="protein sequence ID" value="BAB04826.1"/>
    <property type="molecule type" value="Genomic_DNA"/>
</dbReference>
<dbReference type="PIR" id="C83788">
    <property type="entry name" value="C83788"/>
</dbReference>
<dbReference type="RefSeq" id="WP_010897277.1">
    <property type="nucleotide sequence ID" value="NC_002570.2"/>
</dbReference>
<dbReference type="SMR" id="Q9KDV4"/>
<dbReference type="STRING" id="272558.gene:10727001"/>
<dbReference type="KEGG" id="bha:BH1107"/>
<dbReference type="eggNOG" id="COG0153">
    <property type="taxonomic scope" value="Bacteria"/>
</dbReference>
<dbReference type="HOGENOM" id="CLU_017814_2_1_9"/>
<dbReference type="OrthoDB" id="250531at2"/>
<dbReference type="UniPathway" id="UPA00214"/>
<dbReference type="Proteomes" id="UP000001258">
    <property type="component" value="Chromosome"/>
</dbReference>
<dbReference type="GO" id="GO:0005829">
    <property type="term" value="C:cytosol"/>
    <property type="evidence" value="ECO:0007669"/>
    <property type="project" value="TreeGrafter"/>
</dbReference>
<dbReference type="GO" id="GO:0005524">
    <property type="term" value="F:ATP binding"/>
    <property type="evidence" value="ECO:0007669"/>
    <property type="project" value="UniProtKB-UniRule"/>
</dbReference>
<dbReference type="GO" id="GO:0004335">
    <property type="term" value="F:galactokinase activity"/>
    <property type="evidence" value="ECO:0007669"/>
    <property type="project" value="UniProtKB-UniRule"/>
</dbReference>
<dbReference type="GO" id="GO:0000287">
    <property type="term" value="F:magnesium ion binding"/>
    <property type="evidence" value="ECO:0007669"/>
    <property type="project" value="UniProtKB-UniRule"/>
</dbReference>
<dbReference type="GO" id="GO:0006012">
    <property type="term" value="P:galactose metabolic process"/>
    <property type="evidence" value="ECO:0007669"/>
    <property type="project" value="UniProtKB-UniRule"/>
</dbReference>
<dbReference type="FunFam" id="3.30.230.10:FF:000017">
    <property type="entry name" value="Galactokinase"/>
    <property type="match status" value="1"/>
</dbReference>
<dbReference type="FunFam" id="3.30.70.890:FF:000001">
    <property type="entry name" value="Galactokinase"/>
    <property type="match status" value="1"/>
</dbReference>
<dbReference type="Gene3D" id="3.30.230.10">
    <property type="match status" value="1"/>
</dbReference>
<dbReference type="Gene3D" id="3.30.70.890">
    <property type="entry name" value="GHMP kinase, C-terminal domain"/>
    <property type="match status" value="1"/>
</dbReference>
<dbReference type="HAMAP" id="MF_00246">
    <property type="entry name" value="Galactokinase"/>
    <property type="match status" value="1"/>
</dbReference>
<dbReference type="InterPro" id="IPR000705">
    <property type="entry name" value="Galactokinase"/>
</dbReference>
<dbReference type="InterPro" id="IPR022963">
    <property type="entry name" value="Galactokinase_bac"/>
</dbReference>
<dbReference type="InterPro" id="IPR019741">
    <property type="entry name" value="Galactokinase_CS"/>
</dbReference>
<dbReference type="InterPro" id="IPR019539">
    <property type="entry name" value="GalKase_N"/>
</dbReference>
<dbReference type="InterPro" id="IPR013750">
    <property type="entry name" value="GHMP_kinase_C_dom"/>
</dbReference>
<dbReference type="InterPro" id="IPR036554">
    <property type="entry name" value="GHMP_kinase_C_sf"/>
</dbReference>
<dbReference type="InterPro" id="IPR006204">
    <property type="entry name" value="GHMP_kinase_N_dom"/>
</dbReference>
<dbReference type="InterPro" id="IPR006203">
    <property type="entry name" value="GHMP_knse_ATP-bd_CS"/>
</dbReference>
<dbReference type="InterPro" id="IPR006206">
    <property type="entry name" value="Mevalonate/galactokinase"/>
</dbReference>
<dbReference type="InterPro" id="IPR020568">
    <property type="entry name" value="Ribosomal_Su5_D2-typ_SF"/>
</dbReference>
<dbReference type="InterPro" id="IPR014721">
    <property type="entry name" value="Ribsml_uS5_D2-typ_fold_subgr"/>
</dbReference>
<dbReference type="NCBIfam" id="TIGR00131">
    <property type="entry name" value="gal_kin"/>
    <property type="match status" value="1"/>
</dbReference>
<dbReference type="NCBIfam" id="NF003705">
    <property type="entry name" value="PRK05322.1"/>
    <property type="match status" value="1"/>
</dbReference>
<dbReference type="PANTHER" id="PTHR10457:SF7">
    <property type="entry name" value="GALACTOKINASE-RELATED"/>
    <property type="match status" value="1"/>
</dbReference>
<dbReference type="PANTHER" id="PTHR10457">
    <property type="entry name" value="MEVALONATE KINASE/GALACTOKINASE"/>
    <property type="match status" value="1"/>
</dbReference>
<dbReference type="Pfam" id="PF10509">
    <property type="entry name" value="GalKase_gal_bdg"/>
    <property type="match status" value="1"/>
</dbReference>
<dbReference type="Pfam" id="PF08544">
    <property type="entry name" value="GHMP_kinases_C"/>
    <property type="match status" value="1"/>
</dbReference>
<dbReference type="Pfam" id="PF00288">
    <property type="entry name" value="GHMP_kinases_N"/>
    <property type="match status" value="1"/>
</dbReference>
<dbReference type="PIRSF" id="PIRSF000530">
    <property type="entry name" value="Galactokinase"/>
    <property type="match status" value="1"/>
</dbReference>
<dbReference type="PRINTS" id="PR00473">
    <property type="entry name" value="GALCTOKINASE"/>
</dbReference>
<dbReference type="PRINTS" id="PR00959">
    <property type="entry name" value="MEVGALKINASE"/>
</dbReference>
<dbReference type="SUPFAM" id="SSF55060">
    <property type="entry name" value="GHMP Kinase, C-terminal domain"/>
    <property type="match status" value="1"/>
</dbReference>
<dbReference type="SUPFAM" id="SSF54211">
    <property type="entry name" value="Ribosomal protein S5 domain 2-like"/>
    <property type="match status" value="1"/>
</dbReference>
<dbReference type="PROSITE" id="PS00106">
    <property type="entry name" value="GALACTOKINASE"/>
    <property type="match status" value="1"/>
</dbReference>
<dbReference type="PROSITE" id="PS00627">
    <property type="entry name" value="GHMP_KINASES_ATP"/>
    <property type="match status" value="1"/>
</dbReference>
<name>GAL1_HALH5</name>
<organism>
    <name type="scientific">Halalkalibacterium halodurans (strain ATCC BAA-125 / DSM 18197 / FERM 7344 / JCM 9153 / C-125)</name>
    <name type="common">Bacillus halodurans</name>
    <dbReference type="NCBI Taxonomy" id="272558"/>
    <lineage>
        <taxon>Bacteria</taxon>
        <taxon>Bacillati</taxon>
        <taxon>Bacillota</taxon>
        <taxon>Bacilli</taxon>
        <taxon>Bacillales</taxon>
        <taxon>Bacillaceae</taxon>
        <taxon>Halalkalibacterium (ex Joshi et al. 2022)</taxon>
    </lineage>
</organism>
<reference key="1">
    <citation type="journal article" date="2000" name="Nucleic Acids Res.">
        <title>Complete genome sequence of the alkaliphilic bacterium Bacillus halodurans and genomic sequence comparison with Bacillus subtilis.</title>
        <authorList>
            <person name="Takami H."/>
            <person name="Nakasone K."/>
            <person name="Takaki Y."/>
            <person name="Maeno G."/>
            <person name="Sasaki R."/>
            <person name="Masui N."/>
            <person name="Fuji F."/>
            <person name="Hirama C."/>
            <person name="Nakamura Y."/>
            <person name="Ogasawara N."/>
            <person name="Kuhara S."/>
            <person name="Horikoshi K."/>
        </authorList>
    </citation>
    <scope>NUCLEOTIDE SEQUENCE [LARGE SCALE GENOMIC DNA]</scope>
    <source>
        <strain>ATCC BAA-125 / DSM 18197 / FERM 7344 / JCM 9153 / C-125</strain>
    </source>
</reference>
<keyword id="KW-0067">ATP-binding</keyword>
<keyword id="KW-0119">Carbohydrate metabolism</keyword>
<keyword id="KW-0963">Cytoplasm</keyword>
<keyword id="KW-0299">Galactose metabolism</keyword>
<keyword id="KW-0418">Kinase</keyword>
<keyword id="KW-0460">Magnesium</keyword>
<keyword id="KW-0479">Metal-binding</keyword>
<keyword id="KW-0547">Nucleotide-binding</keyword>
<keyword id="KW-1185">Reference proteome</keyword>
<keyword id="KW-0808">Transferase</keyword>
<protein>
    <recommendedName>
        <fullName evidence="1">Galactokinase</fullName>
        <ecNumber evidence="1">2.7.1.6</ecNumber>
    </recommendedName>
    <alternativeName>
        <fullName evidence="1">Galactose kinase</fullName>
    </alternativeName>
</protein>
<proteinExistence type="inferred from homology"/>
<feature type="chain" id="PRO_0000184602" description="Galactokinase">
    <location>
        <begin position="1"/>
        <end position="395"/>
    </location>
</feature>
<feature type="active site" description="Proton acceptor" evidence="1">
    <location>
        <position position="177"/>
    </location>
</feature>
<feature type="binding site" evidence="1">
    <location>
        <begin position="39"/>
        <end position="42"/>
    </location>
    <ligand>
        <name>substrate</name>
    </ligand>
</feature>
<feature type="binding site" evidence="1">
    <location>
        <position position="73"/>
    </location>
    <ligand>
        <name>ATP</name>
        <dbReference type="ChEBI" id="CHEBI:30616"/>
    </ligand>
</feature>
<feature type="binding site" evidence="1">
    <location>
        <begin position="127"/>
        <end position="133"/>
    </location>
    <ligand>
        <name>ATP</name>
        <dbReference type="ChEBI" id="CHEBI:30616"/>
    </ligand>
</feature>
<feature type="binding site" evidence="1">
    <location>
        <position position="133"/>
    </location>
    <ligand>
        <name>Mg(2+)</name>
        <dbReference type="ChEBI" id="CHEBI:18420"/>
    </ligand>
</feature>
<feature type="binding site" evidence="1">
    <location>
        <position position="165"/>
    </location>
    <ligand>
        <name>Mg(2+)</name>
        <dbReference type="ChEBI" id="CHEBI:18420"/>
    </ligand>
</feature>
<feature type="binding site" evidence="1">
    <location>
        <position position="227"/>
    </location>
    <ligand>
        <name>substrate</name>
    </ligand>
</feature>
<feature type="site" description="Transition state stabilizer" evidence="1">
    <location>
        <position position="33"/>
    </location>
</feature>
<comment type="function">
    <text evidence="1">Catalyzes the transfer of the gamma-phosphate of ATP to D-galactose to form alpha-D-galactose-1-phosphate (Gal-1-P).</text>
</comment>
<comment type="catalytic activity">
    <reaction evidence="1">
        <text>alpha-D-galactose + ATP = alpha-D-galactose 1-phosphate + ADP + H(+)</text>
        <dbReference type="Rhea" id="RHEA:13553"/>
        <dbReference type="ChEBI" id="CHEBI:15378"/>
        <dbReference type="ChEBI" id="CHEBI:28061"/>
        <dbReference type="ChEBI" id="CHEBI:30616"/>
        <dbReference type="ChEBI" id="CHEBI:58336"/>
        <dbReference type="ChEBI" id="CHEBI:456216"/>
        <dbReference type="EC" id="2.7.1.6"/>
    </reaction>
</comment>
<comment type="pathway">
    <text evidence="1">Carbohydrate metabolism; galactose metabolism.</text>
</comment>
<comment type="subcellular location">
    <subcellularLocation>
        <location evidence="1">Cytoplasm</location>
    </subcellularLocation>
</comment>
<comment type="similarity">
    <text evidence="1">Belongs to the GHMP kinase family. GalK subfamily.</text>
</comment>
<gene>
    <name evidence="1" type="primary">galK</name>
    <name type="ordered locus">BH1107</name>
</gene>
<sequence>MEVAYKEDLLTSFAEAFSIDRLTDVRVFFAPGRVNLIGEHTDYNGGYVFPGALTNGTYMVIKLRDDGEYHLRSANFDTSVVFRNSDLRFDPKDDWGNYPKGIIAELAKLGVDLPGATIYFYGNIPNGAGLSSSASIGMVTAYGLTQCSGIDIDRVTLAKLCQRMENDFIGVSTGLMDQFAVGMGKKDHALFLNTSSLEYDQVPLILKGYKLVITNSNKRRGLADSKYNERRRECEIGLEQLRKKQTNLSHLGEVTEEMFAELGPVIEDELIYRRVRHVVTEDARVLAAVSALKAGELQTFGELMKASHLSLREDYDVTGVELDTLFDLQASAPGCIGTRMTGAGFGGCTVSIVHEEEITAFQTVVSKGYEKKIGYKPTFYVTELGDGVNEWKGGA</sequence>